<name>PGK_GEOKA</name>
<reference key="1">
    <citation type="journal article" date="2004" name="Nucleic Acids Res.">
        <title>Thermoadaptation trait revealed by the genome sequence of thermophilic Geobacillus kaustophilus.</title>
        <authorList>
            <person name="Takami H."/>
            <person name="Takaki Y."/>
            <person name="Chee G.-J."/>
            <person name="Nishi S."/>
            <person name="Shimamura S."/>
            <person name="Suzuki H."/>
            <person name="Matsui S."/>
            <person name="Uchiyama I."/>
        </authorList>
    </citation>
    <scope>NUCLEOTIDE SEQUENCE [LARGE SCALE GENOMIC DNA]</scope>
    <source>
        <strain>HTA426</strain>
    </source>
</reference>
<keyword id="KW-0067">ATP-binding</keyword>
<keyword id="KW-0963">Cytoplasm</keyword>
<keyword id="KW-0324">Glycolysis</keyword>
<keyword id="KW-0418">Kinase</keyword>
<keyword id="KW-0547">Nucleotide-binding</keyword>
<keyword id="KW-0597">Phosphoprotein</keyword>
<keyword id="KW-1185">Reference proteome</keyword>
<keyword id="KW-0808">Transferase</keyword>
<sequence>MNKKTIRDVEVRGKRVFCRVDFNVPMEQGAITDDTRIRAALPTIRYLIEHGAKVILASHLGRPKGKVVEELRLDAVAKRLGELLERPVAKTNEAVGDEVKAAVDRLNEGDVLLLENVRFYPGEEKNDPELAKAFAELADLYVNDAFGAAHRAHASTEGIAHYLPAVAGFLMEKELEVLGKALSNPDRPFTAIIGGAKVKDKIGVIDNLLEKVDNLIIGGGLAYTFVKALGHDVGKSLLEEDKIELAKSFMEKAKEKGVRFYMPVDVVVADRFANDANTKVVAIDAIPSDWEALDIGPKTRELYRDVIRQSKLVVWNGPMGVFEMEAFAHGTKAIAEALAEAPDTYSVIGGGDSAAAVEKFGLADKMDHISTGGGASLEFMEGKQLPGVVALEDK</sequence>
<protein>
    <recommendedName>
        <fullName evidence="1">Phosphoglycerate kinase</fullName>
        <ecNumber evidence="1">2.7.2.3</ecNumber>
    </recommendedName>
</protein>
<proteinExistence type="inferred from homology"/>
<organism>
    <name type="scientific">Geobacillus kaustophilus (strain HTA426)</name>
    <dbReference type="NCBI Taxonomy" id="235909"/>
    <lineage>
        <taxon>Bacteria</taxon>
        <taxon>Bacillati</taxon>
        <taxon>Bacillota</taxon>
        <taxon>Bacilli</taxon>
        <taxon>Bacillales</taxon>
        <taxon>Anoxybacillaceae</taxon>
        <taxon>Geobacillus</taxon>
        <taxon>Geobacillus thermoleovorans group</taxon>
    </lineage>
</organism>
<dbReference type="EC" id="2.7.2.3" evidence="1"/>
<dbReference type="EMBL" id="BA000043">
    <property type="protein sequence ID" value="BAD77342.1"/>
    <property type="molecule type" value="Genomic_DNA"/>
</dbReference>
<dbReference type="RefSeq" id="WP_011232527.1">
    <property type="nucleotide sequence ID" value="NC_006510.1"/>
</dbReference>
<dbReference type="BMRB" id="Q5KVE4"/>
<dbReference type="SMR" id="Q5KVE4"/>
<dbReference type="STRING" id="235909.GK3057"/>
<dbReference type="KEGG" id="gka:GK3057"/>
<dbReference type="eggNOG" id="COG0126">
    <property type="taxonomic scope" value="Bacteria"/>
</dbReference>
<dbReference type="HOGENOM" id="CLU_025427_0_2_9"/>
<dbReference type="UniPathway" id="UPA00109">
    <property type="reaction ID" value="UER00185"/>
</dbReference>
<dbReference type="Proteomes" id="UP000001172">
    <property type="component" value="Chromosome"/>
</dbReference>
<dbReference type="GO" id="GO:0005829">
    <property type="term" value="C:cytosol"/>
    <property type="evidence" value="ECO:0007669"/>
    <property type="project" value="TreeGrafter"/>
</dbReference>
<dbReference type="GO" id="GO:0043531">
    <property type="term" value="F:ADP binding"/>
    <property type="evidence" value="ECO:0007669"/>
    <property type="project" value="TreeGrafter"/>
</dbReference>
<dbReference type="GO" id="GO:0005524">
    <property type="term" value="F:ATP binding"/>
    <property type="evidence" value="ECO:0007669"/>
    <property type="project" value="UniProtKB-KW"/>
</dbReference>
<dbReference type="GO" id="GO:0004618">
    <property type="term" value="F:phosphoglycerate kinase activity"/>
    <property type="evidence" value="ECO:0007669"/>
    <property type="project" value="UniProtKB-UniRule"/>
</dbReference>
<dbReference type="GO" id="GO:0006094">
    <property type="term" value="P:gluconeogenesis"/>
    <property type="evidence" value="ECO:0007669"/>
    <property type="project" value="TreeGrafter"/>
</dbReference>
<dbReference type="GO" id="GO:0006096">
    <property type="term" value="P:glycolytic process"/>
    <property type="evidence" value="ECO:0007669"/>
    <property type="project" value="UniProtKB-UniRule"/>
</dbReference>
<dbReference type="CDD" id="cd00318">
    <property type="entry name" value="Phosphoglycerate_kinase"/>
    <property type="match status" value="1"/>
</dbReference>
<dbReference type="FunFam" id="3.40.50.1260:FF:000001">
    <property type="entry name" value="Phosphoglycerate kinase"/>
    <property type="match status" value="1"/>
</dbReference>
<dbReference type="FunFam" id="3.40.50.1260:FF:000002">
    <property type="entry name" value="Phosphoglycerate kinase"/>
    <property type="match status" value="1"/>
</dbReference>
<dbReference type="Gene3D" id="3.40.50.1260">
    <property type="entry name" value="Phosphoglycerate kinase, N-terminal domain"/>
    <property type="match status" value="2"/>
</dbReference>
<dbReference type="HAMAP" id="MF_00145">
    <property type="entry name" value="Phosphoglyc_kinase"/>
    <property type="match status" value="1"/>
</dbReference>
<dbReference type="InterPro" id="IPR001576">
    <property type="entry name" value="Phosphoglycerate_kinase"/>
</dbReference>
<dbReference type="InterPro" id="IPR015911">
    <property type="entry name" value="Phosphoglycerate_kinase_CS"/>
</dbReference>
<dbReference type="InterPro" id="IPR015824">
    <property type="entry name" value="Phosphoglycerate_kinase_N"/>
</dbReference>
<dbReference type="InterPro" id="IPR036043">
    <property type="entry name" value="Phosphoglycerate_kinase_sf"/>
</dbReference>
<dbReference type="PANTHER" id="PTHR11406">
    <property type="entry name" value="PHOSPHOGLYCERATE KINASE"/>
    <property type="match status" value="1"/>
</dbReference>
<dbReference type="PANTHER" id="PTHR11406:SF23">
    <property type="entry name" value="PHOSPHOGLYCERATE KINASE 1, CHLOROPLASTIC-RELATED"/>
    <property type="match status" value="1"/>
</dbReference>
<dbReference type="Pfam" id="PF00162">
    <property type="entry name" value="PGK"/>
    <property type="match status" value="1"/>
</dbReference>
<dbReference type="PIRSF" id="PIRSF000724">
    <property type="entry name" value="Pgk"/>
    <property type="match status" value="1"/>
</dbReference>
<dbReference type="PRINTS" id="PR00477">
    <property type="entry name" value="PHGLYCKINASE"/>
</dbReference>
<dbReference type="SUPFAM" id="SSF53748">
    <property type="entry name" value="Phosphoglycerate kinase"/>
    <property type="match status" value="1"/>
</dbReference>
<dbReference type="PROSITE" id="PS00111">
    <property type="entry name" value="PGLYCERATE_KINASE"/>
    <property type="match status" value="1"/>
</dbReference>
<feature type="chain" id="PRO_1000057996" description="Phosphoglycerate kinase">
    <location>
        <begin position="1"/>
        <end position="394"/>
    </location>
</feature>
<feature type="binding site" evidence="1">
    <location>
        <begin position="21"/>
        <end position="23"/>
    </location>
    <ligand>
        <name>substrate</name>
    </ligand>
</feature>
<feature type="binding site" evidence="1">
    <location>
        <position position="36"/>
    </location>
    <ligand>
        <name>substrate</name>
    </ligand>
</feature>
<feature type="binding site" evidence="1">
    <location>
        <begin position="59"/>
        <end position="62"/>
    </location>
    <ligand>
        <name>substrate</name>
    </ligand>
</feature>
<feature type="binding site" evidence="1">
    <location>
        <position position="118"/>
    </location>
    <ligand>
        <name>substrate</name>
    </ligand>
</feature>
<feature type="binding site" evidence="1">
    <location>
        <position position="151"/>
    </location>
    <ligand>
        <name>substrate</name>
    </ligand>
</feature>
<feature type="binding site" evidence="1">
    <location>
        <position position="201"/>
    </location>
    <ligand>
        <name>ATP</name>
        <dbReference type="ChEBI" id="CHEBI:30616"/>
    </ligand>
</feature>
<feature type="binding site" evidence="1">
    <location>
        <position position="323"/>
    </location>
    <ligand>
        <name>ATP</name>
        <dbReference type="ChEBI" id="CHEBI:30616"/>
    </ligand>
</feature>
<feature type="binding site" evidence="1">
    <location>
        <begin position="350"/>
        <end position="353"/>
    </location>
    <ligand>
        <name>ATP</name>
        <dbReference type="ChEBI" id="CHEBI:30616"/>
    </ligand>
</feature>
<feature type="modified residue" description="Phosphoserine" evidence="1">
    <location>
        <position position="183"/>
    </location>
</feature>
<feature type="modified residue" description="Phosphothreonine" evidence="1">
    <location>
        <position position="299"/>
    </location>
</feature>
<comment type="catalytic activity">
    <reaction evidence="1">
        <text>(2R)-3-phosphoglycerate + ATP = (2R)-3-phospho-glyceroyl phosphate + ADP</text>
        <dbReference type="Rhea" id="RHEA:14801"/>
        <dbReference type="ChEBI" id="CHEBI:30616"/>
        <dbReference type="ChEBI" id="CHEBI:57604"/>
        <dbReference type="ChEBI" id="CHEBI:58272"/>
        <dbReference type="ChEBI" id="CHEBI:456216"/>
        <dbReference type="EC" id="2.7.2.3"/>
    </reaction>
</comment>
<comment type="pathway">
    <text evidence="1">Carbohydrate degradation; glycolysis; pyruvate from D-glyceraldehyde 3-phosphate: step 2/5.</text>
</comment>
<comment type="subunit">
    <text evidence="1">Monomer.</text>
</comment>
<comment type="subcellular location">
    <subcellularLocation>
        <location evidence="1">Cytoplasm</location>
    </subcellularLocation>
</comment>
<comment type="similarity">
    <text evidence="1">Belongs to the phosphoglycerate kinase family.</text>
</comment>
<gene>
    <name evidence="1" type="primary">pgk</name>
    <name type="ordered locus">GK3057</name>
</gene>
<evidence type="ECO:0000255" key="1">
    <source>
        <dbReference type="HAMAP-Rule" id="MF_00145"/>
    </source>
</evidence>
<accession>Q5KVE4</accession>